<keyword id="KW-0963">Cytoplasm</keyword>
<keyword id="KW-0378">Hydrolase</keyword>
<keyword id="KW-0488">Methylation</keyword>
<keyword id="KW-0597">Phosphoprotein</keyword>
<keyword id="KW-1185">Reference proteome</keyword>
<keyword id="KW-0677">Repeat</keyword>
<keyword id="KW-0729">SH3-binding</keyword>
<accession>P59644</accession>
<accession>Q3TDM9</accession>
<protein>
    <recommendedName>
        <fullName>Phosphatidylinositol 4,5-bisphosphate 5-phosphatase A</fullName>
        <ecNumber evidence="2">3.1.3.36</ecNumber>
    </recommendedName>
    <alternativeName>
        <fullName>Inositol polyphosphate 5-phosphatase J</fullName>
    </alternativeName>
    <alternativeName>
        <fullName>Phosphatidylinositol 1,3,4,5-tetrakisphosphate 5-phosphatase</fullName>
        <ecNumber evidence="2">3.1.3.56</ecNumber>
    </alternativeName>
    <alternativeName>
        <fullName>Phosphatidylinositol 1,4,5-trisphosphate 5-phosphatase</fullName>
        <ecNumber evidence="2">3.1.3.56</ecNumber>
    </alternativeName>
</protein>
<organism>
    <name type="scientific">Mus musculus</name>
    <name type="common">Mouse</name>
    <dbReference type="NCBI Taxonomy" id="10090"/>
    <lineage>
        <taxon>Eukaryota</taxon>
        <taxon>Metazoa</taxon>
        <taxon>Chordata</taxon>
        <taxon>Craniata</taxon>
        <taxon>Vertebrata</taxon>
        <taxon>Euteleostomi</taxon>
        <taxon>Mammalia</taxon>
        <taxon>Eutheria</taxon>
        <taxon>Euarchontoglires</taxon>
        <taxon>Glires</taxon>
        <taxon>Rodentia</taxon>
        <taxon>Myomorpha</taxon>
        <taxon>Muroidea</taxon>
        <taxon>Muridae</taxon>
        <taxon>Murinae</taxon>
        <taxon>Mus</taxon>
        <taxon>Mus</taxon>
    </lineage>
</organism>
<proteinExistence type="evidence at protein level"/>
<feature type="chain" id="PRO_0000209739" description="Phosphatidylinositol 4,5-bisphosphate 5-phosphatase A">
    <location>
        <begin position="1"/>
        <end position="1003"/>
    </location>
</feature>
<feature type="region of interest" description="Disordered" evidence="4">
    <location>
        <begin position="1"/>
        <end position="110"/>
    </location>
</feature>
<feature type="region of interest" description="Disordered" evidence="4">
    <location>
        <begin position="147"/>
        <end position="414"/>
    </location>
</feature>
<feature type="region of interest" description="Catalytic" evidence="3">
    <location>
        <begin position="422"/>
        <end position="725"/>
    </location>
</feature>
<feature type="region of interest" description="Required for ruffle localization">
    <location>
        <begin position="726"/>
        <end position="837"/>
    </location>
</feature>
<feature type="region of interest" description="Disordered" evidence="4">
    <location>
        <begin position="839"/>
        <end position="1003"/>
    </location>
</feature>
<feature type="short sequence motif" description="RSXSXX motif 1">
    <location>
        <begin position="6"/>
        <end position="11"/>
    </location>
</feature>
<feature type="short sequence motif" description="SH3-binding" evidence="3">
    <location>
        <begin position="346"/>
        <end position="351"/>
    </location>
</feature>
<feature type="short sequence motif" description="RSXSXX motif 2">
    <location>
        <begin position="351"/>
        <end position="356"/>
    </location>
</feature>
<feature type="short sequence motif" description="RSXSXX motif 3">
    <location>
        <begin position="871"/>
        <end position="876"/>
    </location>
</feature>
<feature type="short sequence motif" description="RSXSXX motif 4">
    <location>
        <begin position="882"/>
        <end position="887"/>
    </location>
</feature>
<feature type="short sequence motif" description="RSXSXX motif 5">
    <location>
        <begin position="908"/>
        <end position="913"/>
    </location>
</feature>
<feature type="compositionally biased region" description="Low complexity" evidence="4">
    <location>
        <begin position="11"/>
        <end position="24"/>
    </location>
</feature>
<feature type="compositionally biased region" description="Polar residues" evidence="4">
    <location>
        <begin position="160"/>
        <end position="174"/>
    </location>
</feature>
<feature type="compositionally biased region" description="Low complexity" evidence="4">
    <location>
        <begin position="180"/>
        <end position="196"/>
    </location>
</feature>
<feature type="compositionally biased region" description="Pro residues" evidence="4">
    <location>
        <begin position="197"/>
        <end position="210"/>
    </location>
</feature>
<feature type="compositionally biased region" description="Basic and acidic residues" evidence="4">
    <location>
        <begin position="284"/>
        <end position="294"/>
    </location>
</feature>
<feature type="compositionally biased region" description="Pro residues" evidence="4">
    <location>
        <begin position="338"/>
        <end position="348"/>
    </location>
</feature>
<feature type="compositionally biased region" description="Low complexity" evidence="4">
    <location>
        <begin position="349"/>
        <end position="361"/>
    </location>
</feature>
<feature type="compositionally biased region" description="Low complexity" evidence="4">
    <location>
        <begin position="390"/>
        <end position="413"/>
    </location>
</feature>
<feature type="compositionally biased region" description="Low complexity" evidence="4">
    <location>
        <begin position="840"/>
        <end position="855"/>
    </location>
</feature>
<feature type="compositionally biased region" description="Low complexity" evidence="4">
    <location>
        <begin position="907"/>
        <end position="919"/>
    </location>
</feature>
<feature type="compositionally biased region" description="Low complexity" evidence="4">
    <location>
        <begin position="927"/>
        <end position="943"/>
    </location>
</feature>
<feature type="modified residue" description="Asymmetric dimethylarginine; alternate" evidence="8">
    <location>
        <position position="56"/>
    </location>
</feature>
<feature type="modified residue" description="Omega-N-methylarginine; alternate" evidence="8">
    <location>
        <position position="56"/>
    </location>
</feature>
<feature type="modified residue" description="Omega-N-methylarginine" evidence="8">
    <location>
        <position position="65"/>
    </location>
</feature>
<feature type="modified residue" description="Asymmetric dimethylarginine" evidence="8">
    <location>
        <position position="76"/>
    </location>
</feature>
<feature type="modified residue" description="Asymmetric dimethylarginine; alternate" evidence="8">
    <location>
        <position position="83"/>
    </location>
</feature>
<feature type="modified residue" description="Omega-N-methylarginine; alternate" evidence="8">
    <location>
        <position position="83"/>
    </location>
</feature>
<feature type="modified residue" description="Phosphoserine" evidence="2">
    <location>
        <position position="171"/>
    </location>
</feature>
<feature type="modified residue" description="Phosphoserine" evidence="7">
    <location>
        <position position="292"/>
    </location>
</feature>
<feature type="modified residue" description="Phosphoserine" evidence="7">
    <location>
        <position position="325"/>
    </location>
</feature>
<feature type="modified residue" description="Phosphoserine" evidence="1">
    <location>
        <position position="900"/>
    </location>
</feature>
<feature type="modified residue" description="Phosphoserine" evidence="1">
    <location>
        <position position="987"/>
    </location>
</feature>
<feature type="sequence conflict" description="In Ref. 1; BAC28654." evidence="6" ref="1">
    <original>P</original>
    <variation>R</variation>
    <location>
        <position position="343"/>
    </location>
</feature>
<name>PI5PA_MOUSE</name>
<evidence type="ECO:0000250" key="1">
    <source>
        <dbReference type="UniProtKB" id="Q15735"/>
    </source>
</evidence>
<evidence type="ECO:0000250" key="2">
    <source>
        <dbReference type="UniProtKB" id="Q9JMC1"/>
    </source>
</evidence>
<evidence type="ECO:0000255" key="3"/>
<evidence type="ECO:0000256" key="4">
    <source>
        <dbReference type="SAM" id="MobiDB-lite"/>
    </source>
</evidence>
<evidence type="ECO:0000269" key="5">
    <source>
    </source>
</evidence>
<evidence type="ECO:0000305" key="6"/>
<evidence type="ECO:0007744" key="7">
    <source>
    </source>
</evidence>
<evidence type="ECO:0007744" key="8">
    <source>
    </source>
</evidence>
<gene>
    <name type="primary">Inpp5j</name>
    <name type="synonym">Pib5pa</name>
</gene>
<comment type="function">
    <text evidence="2">Inositol 5-phosphatase, which converts inositol 1,4,5-trisphosphate to inositol 1,4-bisphosphate. Also converts phosphatidylinositol 4,5-bisphosphate to phosphatidylinositol 4-phosphate and inositol 1,3,4,5-tetrakisphosphate to inositol 1,3,4-trisphosphate in vitro. May be involved in modulation of the function of inositol and phosphatidylinositol polyphosphate-binding proteins that are present at membranes ruffles.</text>
</comment>
<comment type="catalytic activity">
    <reaction evidence="2">
        <text>1D-myo-inositol 1,4,5-trisphosphate + H2O = 1D-myo-inositol 1,4-bisphosphate + phosphate</text>
        <dbReference type="Rhea" id="RHEA:19797"/>
        <dbReference type="ChEBI" id="CHEBI:15377"/>
        <dbReference type="ChEBI" id="CHEBI:43474"/>
        <dbReference type="ChEBI" id="CHEBI:58282"/>
        <dbReference type="ChEBI" id="CHEBI:203600"/>
        <dbReference type="EC" id="3.1.3.56"/>
    </reaction>
    <physiologicalReaction direction="left-to-right" evidence="2">
        <dbReference type="Rhea" id="RHEA:19798"/>
    </physiologicalReaction>
</comment>
<comment type="catalytic activity">
    <reaction evidence="2">
        <text>1D-myo-inositol 1,3,4,5-tetrakisphosphate + H2O = 1D-myo-inositol 1,3,4-trisphosphate + phosphate</text>
        <dbReference type="Rhea" id="RHEA:11392"/>
        <dbReference type="ChEBI" id="CHEBI:15377"/>
        <dbReference type="ChEBI" id="CHEBI:43474"/>
        <dbReference type="ChEBI" id="CHEBI:57895"/>
        <dbReference type="ChEBI" id="CHEBI:58414"/>
        <dbReference type="EC" id="3.1.3.56"/>
    </reaction>
    <physiologicalReaction direction="left-to-right" evidence="2">
        <dbReference type="Rhea" id="RHEA:11393"/>
    </physiologicalReaction>
</comment>
<comment type="catalytic activity">
    <reaction evidence="2">
        <text>a 1,2-diacyl-sn-glycero-3-phospho-(1D-myo-inositol-4,5-bisphosphate) + H2O = a 1,2-diacyl-sn-glycero-3-phospho-(1D-myo-inositol 4-phosphate) + phosphate</text>
        <dbReference type="Rhea" id="RHEA:22764"/>
        <dbReference type="ChEBI" id="CHEBI:15377"/>
        <dbReference type="ChEBI" id="CHEBI:43474"/>
        <dbReference type="ChEBI" id="CHEBI:58178"/>
        <dbReference type="ChEBI" id="CHEBI:58456"/>
        <dbReference type="EC" id="3.1.3.36"/>
    </reaction>
    <physiologicalReaction direction="left-to-right" evidence="2">
        <dbReference type="Rhea" id="RHEA:22765"/>
    </physiologicalReaction>
</comment>
<comment type="subcellular location">
    <subcellularLocation>
        <location evidence="5">Cytoplasm</location>
    </subcellularLocation>
    <text>Predominantly localized to membrane ruffles.</text>
</comment>
<comment type="domain">
    <text>The 5 Arg-Ser-Xaa-Ser-Xaa-Xaa (RSXSXX) motifs may constitute binding sites for the 14-3-3 protein.</text>
</comment>
<comment type="similarity">
    <text evidence="6">Belongs to the inositol 1,4,5-trisphosphate 5-phosphatase type II family.</text>
</comment>
<dbReference type="EC" id="3.1.3.36" evidence="2"/>
<dbReference type="EC" id="3.1.3.56" evidence="2"/>
<dbReference type="EMBL" id="AK034272">
    <property type="protein sequence ID" value="BAC28654.1"/>
    <property type="molecule type" value="mRNA"/>
</dbReference>
<dbReference type="EMBL" id="AK170114">
    <property type="protein sequence ID" value="BAE41572.1"/>
    <property type="molecule type" value="mRNA"/>
</dbReference>
<dbReference type="EMBL" id="BC131634">
    <property type="protein sequence ID" value="AAI31635.1"/>
    <property type="molecule type" value="mRNA"/>
</dbReference>
<dbReference type="EMBL" id="BC131635">
    <property type="protein sequence ID" value="AAI31636.1"/>
    <property type="molecule type" value="mRNA"/>
</dbReference>
<dbReference type="EMBL" id="CH466574">
    <property type="protein sequence ID" value="EDL40427.1"/>
    <property type="molecule type" value="Genomic_DNA"/>
</dbReference>
<dbReference type="CCDS" id="CCDS24364.1"/>
<dbReference type="RefSeq" id="NP_766027.2">
    <property type="nucleotide sequence ID" value="NM_172439.3"/>
</dbReference>
<dbReference type="RefSeq" id="XP_030101477.1">
    <property type="nucleotide sequence ID" value="XM_030245617.2"/>
</dbReference>
<dbReference type="RefSeq" id="XP_030101478.1">
    <property type="nucleotide sequence ID" value="XM_030245618.1"/>
</dbReference>
<dbReference type="SMR" id="P59644"/>
<dbReference type="BioGRID" id="228465">
    <property type="interactions" value="2"/>
</dbReference>
<dbReference type="FunCoup" id="P59644">
    <property type="interactions" value="179"/>
</dbReference>
<dbReference type="IntAct" id="P59644">
    <property type="interactions" value="1"/>
</dbReference>
<dbReference type="MINT" id="P59644"/>
<dbReference type="STRING" id="10090.ENSMUSP00000046625"/>
<dbReference type="GlyGen" id="P59644">
    <property type="glycosylation" value="7 sites, 1 O-linked glycan (6 sites)"/>
</dbReference>
<dbReference type="iPTMnet" id="P59644"/>
<dbReference type="PhosphoSitePlus" id="P59644"/>
<dbReference type="PaxDb" id="10090-ENSMUSP00000046625"/>
<dbReference type="PeptideAtlas" id="P59644"/>
<dbReference type="ProteomicsDB" id="289419"/>
<dbReference type="Antibodypedia" id="5745">
    <property type="antibodies" value="199 antibodies from 29 providers"/>
</dbReference>
<dbReference type="DNASU" id="170835"/>
<dbReference type="Ensembl" id="ENSMUST00000044507.12">
    <property type="protein sequence ID" value="ENSMUSP00000046625.6"/>
    <property type="gene ID" value="ENSMUSG00000034570.13"/>
</dbReference>
<dbReference type="GeneID" id="170835"/>
<dbReference type="KEGG" id="mmu:170835"/>
<dbReference type="UCSC" id="uc007hta.2">
    <property type="organism name" value="mouse"/>
</dbReference>
<dbReference type="AGR" id="MGI:2158663"/>
<dbReference type="CTD" id="27124"/>
<dbReference type="MGI" id="MGI:2158663">
    <property type="gene designation" value="Inpp5j"/>
</dbReference>
<dbReference type="VEuPathDB" id="HostDB:ENSMUSG00000034570"/>
<dbReference type="eggNOG" id="KOG0565">
    <property type="taxonomic scope" value="Eukaryota"/>
</dbReference>
<dbReference type="GeneTree" id="ENSGT00940000156855"/>
<dbReference type="HOGENOM" id="CLU_011711_3_0_1"/>
<dbReference type="InParanoid" id="P59644"/>
<dbReference type="OMA" id="NMAKSSW"/>
<dbReference type="OrthoDB" id="62798at2759"/>
<dbReference type="PhylomeDB" id="P59644"/>
<dbReference type="TreeFam" id="TF317034"/>
<dbReference type="Reactome" id="R-MMU-1660499">
    <property type="pathway name" value="Synthesis of PIPs at the plasma membrane"/>
</dbReference>
<dbReference type="Reactome" id="R-MMU-1855183">
    <property type="pathway name" value="Synthesis of IP2, IP, and Ins in the cytosol"/>
</dbReference>
<dbReference type="Reactome" id="R-MMU-1855204">
    <property type="pathway name" value="Synthesis of IP3 and IP4 in the cytosol"/>
</dbReference>
<dbReference type="BioGRID-ORCS" id="170835">
    <property type="hits" value="5 hits in 81 CRISPR screens"/>
</dbReference>
<dbReference type="PRO" id="PR:P59644"/>
<dbReference type="Proteomes" id="UP000000589">
    <property type="component" value="Chromosome 11"/>
</dbReference>
<dbReference type="RNAct" id="P59644">
    <property type="molecule type" value="protein"/>
</dbReference>
<dbReference type="Bgee" id="ENSMUSG00000034570">
    <property type="expression patterns" value="Expressed in cerebellar cortex and 195 other cell types or tissues"/>
</dbReference>
<dbReference type="ExpressionAtlas" id="P59644">
    <property type="expression patterns" value="baseline and differential"/>
</dbReference>
<dbReference type="GO" id="GO:0005737">
    <property type="term" value="C:cytoplasm"/>
    <property type="evidence" value="ECO:0000266"/>
    <property type="project" value="MGI"/>
</dbReference>
<dbReference type="GO" id="GO:0043198">
    <property type="term" value="C:dendritic shaft"/>
    <property type="evidence" value="ECO:0000314"/>
    <property type="project" value="MGI"/>
</dbReference>
<dbReference type="GO" id="GO:0030426">
    <property type="term" value="C:growth cone"/>
    <property type="evidence" value="ECO:0000314"/>
    <property type="project" value="MGI"/>
</dbReference>
<dbReference type="GO" id="GO:0005886">
    <property type="term" value="C:plasma membrane"/>
    <property type="evidence" value="ECO:0000314"/>
    <property type="project" value="MGI"/>
</dbReference>
<dbReference type="GO" id="GO:0001726">
    <property type="term" value="C:ruffle"/>
    <property type="evidence" value="ECO:0000266"/>
    <property type="project" value="MGI"/>
</dbReference>
<dbReference type="GO" id="GO:0032587">
    <property type="term" value="C:ruffle membrane"/>
    <property type="evidence" value="ECO:0000266"/>
    <property type="project" value="MGI"/>
</dbReference>
<dbReference type="GO" id="GO:0052659">
    <property type="term" value="F:inositol-1,3,4,5-tetrakisphosphate 5-phosphatase activity"/>
    <property type="evidence" value="ECO:0007669"/>
    <property type="project" value="RHEA"/>
</dbReference>
<dbReference type="GO" id="GO:0052658">
    <property type="term" value="F:inositol-1,4,5-trisphosphate 5-phosphatase activity"/>
    <property type="evidence" value="ECO:0007669"/>
    <property type="project" value="RHEA"/>
</dbReference>
<dbReference type="GO" id="GO:0004445">
    <property type="term" value="F:inositol-polyphosphate 5-phosphatase activity"/>
    <property type="evidence" value="ECO:0000266"/>
    <property type="project" value="MGI"/>
</dbReference>
<dbReference type="GO" id="GO:0034485">
    <property type="term" value="F:phosphatidylinositol-3,4,5-trisphosphate 5-phosphatase activity"/>
    <property type="evidence" value="ECO:0000314"/>
    <property type="project" value="MGI"/>
</dbReference>
<dbReference type="GO" id="GO:0004439">
    <property type="term" value="F:phosphatidylinositol-4,5-bisphosphate 5-phosphatase activity"/>
    <property type="evidence" value="ECO:0007669"/>
    <property type="project" value="RHEA"/>
</dbReference>
<dbReference type="GO" id="GO:0017124">
    <property type="term" value="F:SH3 domain binding"/>
    <property type="evidence" value="ECO:0007669"/>
    <property type="project" value="UniProtKB-KW"/>
</dbReference>
<dbReference type="GO" id="GO:0010977">
    <property type="term" value="P:negative regulation of neuron projection development"/>
    <property type="evidence" value="ECO:0000314"/>
    <property type="project" value="MGI"/>
</dbReference>
<dbReference type="GO" id="GO:0046856">
    <property type="term" value="P:phosphatidylinositol dephosphorylation"/>
    <property type="evidence" value="ECO:0007669"/>
    <property type="project" value="InterPro"/>
</dbReference>
<dbReference type="CDD" id="cd09094">
    <property type="entry name" value="INPP5c_INPP5J-like"/>
    <property type="match status" value="1"/>
</dbReference>
<dbReference type="FunFam" id="2.60.40.2840:FF:000003">
    <property type="entry name" value="Phosphatidylinositol 4,5-bisphosphate 5-phosphatase A"/>
    <property type="match status" value="1"/>
</dbReference>
<dbReference type="FunFam" id="3.60.10.10:FF:000013">
    <property type="entry name" value="Phosphatidylinositol 4,5-bisphosphate 5-phosphatase A"/>
    <property type="match status" value="1"/>
</dbReference>
<dbReference type="Gene3D" id="2.60.40.2840">
    <property type="match status" value="1"/>
</dbReference>
<dbReference type="Gene3D" id="3.60.10.10">
    <property type="entry name" value="Endonuclease/exonuclease/phosphatase"/>
    <property type="match status" value="1"/>
</dbReference>
<dbReference type="InterPro" id="IPR036691">
    <property type="entry name" value="Endo/exonu/phosph_ase_sf"/>
</dbReference>
<dbReference type="InterPro" id="IPR046985">
    <property type="entry name" value="IP5"/>
</dbReference>
<dbReference type="InterPro" id="IPR000300">
    <property type="entry name" value="IPPc"/>
</dbReference>
<dbReference type="InterPro" id="IPR041611">
    <property type="entry name" value="SKICH"/>
</dbReference>
<dbReference type="PANTHER" id="PTHR11200">
    <property type="entry name" value="INOSITOL 5-PHOSPHATASE"/>
    <property type="match status" value="1"/>
</dbReference>
<dbReference type="PANTHER" id="PTHR11200:SF127">
    <property type="entry name" value="PHOSPHATIDYLINOSITOL 4,5-BISPHOSPHATE 5-PHOSPHATASE A"/>
    <property type="match status" value="1"/>
</dbReference>
<dbReference type="Pfam" id="PF22669">
    <property type="entry name" value="Exo_endo_phos2"/>
    <property type="match status" value="1"/>
</dbReference>
<dbReference type="Pfam" id="PF17751">
    <property type="entry name" value="SKICH"/>
    <property type="match status" value="1"/>
</dbReference>
<dbReference type="SMART" id="SM00128">
    <property type="entry name" value="IPPc"/>
    <property type="match status" value="1"/>
</dbReference>
<dbReference type="SUPFAM" id="SSF56219">
    <property type="entry name" value="DNase I-like"/>
    <property type="match status" value="1"/>
</dbReference>
<sequence>MEGQTRSGSARPGTRTGLGPLPGTHGVLQAEIPSKKVNSSFQLPAKNSGPASSEPRLTLAPVGPRAAVSPPSERPRLVLSSPRPVLAPLSIAGEQKRPPPPHSSNRAAKSVGQLVVSAAAASKPPPVASVSILAPKSLGQLVISASAMPRPSPAPLGSVLTPTSRDQKQLSPTSVGPKPALATSGLSLALASQEQPPQSPSSPSPVPSPVLSPSQEGHLAAASVTSTPASERQLPARQKDTAVPRPTPPADKCLYTPERAAGPATSPPRAQAFSDPRLSPSFRARPEAPRHSPEDPVLPPPPQTLPLDVSPGLPESGTRSPGLLSPTFRPGIPSSQTVPPPLPKPPRSPSRSPSRSPNRSPCLPPAPEVALPKPVTQAAGSGRCPSPNLQAQESPAAATTTTSPTSSWSAQPTCKSDPGFRITVVTWNVGTAMPPDDVTSLLHLGSGHDNDGADMIAIGLQEVNSMINKRLKDALFTDQWSELFMDALGPFNFVLVSTVRMQGVILLLFAKYYHLPFLRDVQTDCTRTGLGGYWGNKGGVSVRLAAFGHMLCFLNCHLPAHMDKAEQRKDNFQTILSLQQFQGPGAHGILDHDLVFWFGDLNFRIESYDLHFVKFAIDSNQLHQLWEKDQLNMAKNTWPILKGFQEGPLNFAPTFKFDVGTNKYDTSAKKRKPAWTDRILWKVKAPSGGPSPSGRESHRLQVTQHSYRSHMEYTVSDHKPVAAQFILQFAFRDDVPLVRLEVADEWARPEQAVVRYRVETVFARSSWDWIGLYRVGFRHCKDYVAYVWAKHEEVDGNIYQVTFSEESLPKGHGDFILGYYSHHHSILIGVTEPFQISLPTSESASSSTDSSGTSSEGEDDSTLELLAPKSRSPSPGKSKRHRSRSPGLARFPSLALHPSSRERRGGSRSPSPQSRQLPRVAPDRGHSSSSRGSSEEGPSGLPGPWAFPPSVPRSLGLLPALRLETVDPGGGGSWGADQEAPDPNSLSPSPQGRLGLEEGGLGP</sequence>
<reference key="1">
    <citation type="journal article" date="2005" name="Science">
        <title>The transcriptional landscape of the mammalian genome.</title>
        <authorList>
            <person name="Carninci P."/>
            <person name="Kasukawa T."/>
            <person name="Katayama S."/>
            <person name="Gough J."/>
            <person name="Frith M.C."/>
            <person name="Maeda N."/>
            <person name="Oyama R."/>
            <person name="Ravasi T."/>
            <person name="Lenhard B."/>
            <person name="Wells C."/>
            <person name="Kodzius R."/>
            <person name="Shimokawa K."/>
            <person name="Bajic V.B."/>
            <person name="Brenner S.E."/>
            <person name="Batalov S."/>
            <person name="Forrest A.R."/>
            <person name="Zavolan M."/>
            <person name="Davis M.J."/>
            <person name="Wilming L.G."/>
            <person name="Aidinis V."/>
            <person name="Allen J.E."/>
            <person name="Ambesi-Impiombato A."/>
            <person name="Apweiler R."/>
            <person name="Aturaliya R.N."/>
            <person name="Bailey T.L."/>
            <person name="Bansal M."/>
            <person name="Baxter L."/>
            <person name="Beisel K.W."/>
            <person name="Bersano T."/>
            <person name="Bono H."/>
            <person name="Chalk A.M."/>
            <person name="Chiu K.P."/>
            <person name="Choudhary V."/>
            <person name="Christoffels A."/>
            <person name="Clutterbuck D.R."/>
            <person name="Crowe M.L."/>
            <person name="Dalla E."/>
            <person name="Dalrymple B.P."/>
            <person name="de Bono B."/>
            <person name="Della Gatta G."/>
            <person name="di Bernardo D."/>
            <person name="Down T."/>
            <person name="Engstrom P."/>
            <person name="Fagiolini M."/>
            <person name="Faulkner G."/>
            <person name="Fletcher C.F."/>
            <person name="Fukushima T."/>
            <person name="Furuno M."/>
            <person name="Futaki S."/>
            <person name="Gariboldi M."/>
            <person name="Georgii-Hemming P."/>
            <person name="Gingeras T.R."/>
            <person name="Gojobori T."/>
            <person name="Green R.E."/>
            <person name="Gustincich S."/>
            <person name="Harbers M."/>
            <person name="Hayashi Y."/>
            <person name="Hensch T.K."/>
            <person name="Hirokawa N."/>
            <person name="Hill D."/>
            <person name="Huminiecki L."/>
            <person name="Iacono M."/>
            <person name="Ikeo K."/>
            <person name="Iwama A."/>
            <person name="Ishikawa T."/>
            <person name="Jakt M."/>
            <person name="Kanapin A."/>
            <person name="Katoh M."/>
            <person name="Kawasawa Y."/>
            <person name="Kelso J."/>
            <person name="Kitamura H."/>
            <person name="Kitano H."/>
            <person name="Kollias G."/>
            <person name="Krishnan S.P."/>
            <person name="Kruger A."/>
            <person name="Kummerfeld S.K."/>
            <person name="Kurochkin I.V."/>
            <person name="Lareau L.F."/>
            <person name="Lazarevic D."/>
            <person name="Lipovich L."/>
            <person name="Liu J."/>
            <person name="Liuni S."/>
            <person name="McWilliam S."/>
            <person name="Madan Babu M."/>
            <person name="Madera M."/>
            <person name="Marchionni L."/>
            <person name="Matsuda H."/>
            <person name="Matsuzawa S."/>
            <person name="Miki H."/>
            <person name="Mignone F."/>
            <person name="Miyake S."/>
            <person name="Morris K."/>
            <person name="Mottagui-Tabar S."/>
            <person name="Mulder N."/>
            <person name="Nakano N."/>
            <person name="Nakauchi H."/>
            <person name="Ng P."/>
            <person name="Nilsson R."/>
            <person name="Nishiguchi S."/>
            <person name="Nishikawa S."/>
            <person name="Nori F."/>
            <person name="Ohara O."/>
            <person name="Okazaki Y."/>
            <person name="Orlando V."/>
            <person name="Pang K.C."/>
            <person name="Pavan W.J."/>
            <person name="Pavesi G."/>
            <person name="Pesole G."/>
            <person name="Petrovsky N."/>
            <person name="Piazza S."/>
            <person name="Reed J."/>
            <person name="Reid J.F."/>
            <person name="Ring B.Z."/>
            <person name="Ringwald M."/>
            <person name="Rost B."/>
            <person name="Ruan Y."/>
            <person name="Salzberg S.L."/>
            <person name="Sandelin A."/>
            <person name="Schneider C."/>
            <person name="Schoenbach C."/>
            <person name="Sekiguchi K."/>
            <person name="Semple C.A."/>
            <person name="Seno S."/>
            <person name="Sessa L."/>
            <person name="Sheng Y."/>
            <person name="Shibata Y."/>
            <person name="Shimada H."/>
            <person name="Shimada K."/>
            <person name="Silva D."/>
            <person name="Sinclair B."/>
            <person name="Sperling S."/>
            <person name="Stupka E."/>
            <person name="Sugiura K."/>
            <person name="Sultana R."/>
            <person name="Takenaka Y."/>
            <person name="Taki K."/>
            <person name="Tammoja K."/>
            <person name="Tan S.L."/>
            <person name="Tang S."/>
            <person name="Taylor M.S."/>
            <person name="Tegner J."/>
            <person name="Teichmann S.A."/>
            <person name="Ueda H.R."/>
            <person name="van Nimwegen E."/>
            <person name="Verardo R."/>
            <person name="Wei C.L."/>
            <person name="Yagi K."/>
            <person name="Yamanishi H."/>
            <person name="Zabarovsky E."/>
            <person name="Zhu S."/>
            <person name="Zimmer A."/>
            <person name="Hide W."/>
            <person name="Bult C."/>
            <person name="Grimmond S.M."/>
            <person name="Teasdale R.D."/>
            <person name="Liu E.T."/>
            <person name="Brusic V."/>
            <person name="Quackenbush J."/>
            <person name="Wahlestedt C."/>
            <person name="Mattick J.S."/>
            <person name="Hume D.A."/>
            <person name="Kai C."/>
            <person name="Sasaki D."/>
            <person name="Tomaru Y."/>
            <person name="Fukuda S."/>
            <person name="Kanamori-Katayama M."/>
            <person name="Suzuki M."/>
            <person name="Aoki J."/>
            <person name="Arakawa T."/>
            <person name="Iida J."/>
            <person name="Imamura K."/>
            <person name="Itoh M."/>
            <person name="Kato T."/>
            <person name="Kawaji H."/>
            <person name="Kawagashira N."/>
            <person name="Kawashima T."/>
            <person name="Kojima M."/>
            <person name="Kondo S."/>
            <person name="Konno H."/>
            <person name="Nakano K."/>
            <person name="Ninomiya N."/>
            <person name="Nishio T."/>
            <person name="Okada M."/>
            <person name="Plessy C."/>
            <person name="Shibata K."/>
            <person name="Shiraki T."/>
            <person name="Suzuki S."/>
            <person name="Tagami M."/>
            <person name="Waki K."/>
            <person name="Watahiki A."/>
            <person name="Okamura-Oho Y."/>
            <person name="Suzuki H."/>
            <person name="Kawai J."/>
            <person name="Hayashizaki Y."/>
        </authorList>
    </citation>
    <scope>NUCLEOTIDE SEQUENCE [LARGE SCALE MRNA]</scope>
    <source>
        <strain>C57BL/6J</strain>
        <strain>NOD</strain>
        <tissue>Diencephalon</tissue>
    </source>
</reference>
<reference key="2">
    <citation type="submission" date="2005-07" db="EMBL/GenBank/DDBJ databases">
        <authorList>
            <person name="Mural R.J."/>
            <person name="Adams M.D."/>
            <person name="Myers E.W."/>
            <person name="Smith H.O."/>
            <person name="Venter J.C."/>
        </authorList>
    </citation>
    <scope>NUCLEOTIDE SEQUENCE [LARGE SCALE GENOMIC DNA]</scope>
</reference>
<reference key="3">
    <citation type="journal article" date="2004" name="Genome Res.">
        <title>The status, quality, and expansion of the NIH full-length cDNA project: the Mammalian Gene Collection (MGC).</title>
        <authorList>
            <consortium name="The MGC Project Team"/>
        </authorList>
    </citation>
    <scope>NUCLEOTIDE SEQUENCE [LARGE SCALE MRNA]</scope>
</reference>
<reference key="4">
    <citation type="journal article" date="2003" name="J. Biol. Chem.">
        <title>Identification of a novel domain in two mammalian inositol-polyphosphate 5-phosphatases that mediates membrane ruffle localization. The inositol 5-phosphatase SKIP localizes to the endoplasmic reticulum and translocates to membrane ruffles following epidermal growth factor stimulation.</title>
        <authorList>
            <person name="Gurung R."/>
            <person name="Tan A."/>
            <person name="Ooms L.M."/>
            <person name="McGrath M.J."/>
            <person name="Huysmans R.D."/>
            <person name="Munday A.D."/>
            <person name="Prescott M."/>
            <person name="Whisstock J.C."/>
            <person name="Mitchell C.A."/>
        </authorList>
    </citation>
    <scope>SUBCELLULAR LOCATION</scope>
    <scope>IDENTIFICATION OF DOMAIN REQUIRED FOR MEMBRANE RUFFLE LOCALIZATION</scope>
</reference>
<reference key="5">
    <citation type="journal article" date="2010" name="Cell">
        <title>A tissue-specific atlas of mouse protein phosphorylation and expression.</title>
        <authorList>
            <person name="Huttlin E.L."/>
            <person name="Jedrychowski M.P."/>
            <person name="Elias J.E."/>
            <person name="Goswami T."/>
            <person name="Rad R."/>
            <person name="Beausoleil S.A."/>
            <person name="Villen J."/>
            <person name="Haas W."/>
            <person name="Sowa M.E."/>
            <person name="Gygi S.P."/>
        </authorList>
    </citation>
    <scope>PHOSPHORYLATION [LARGE SCALE ANALYSIS] AT SER-292 AND SER-325</scope>
    <scope>IDENTIFICATION BY MASS SPECTROMETRY [LARGE SCALE ANALYSIS]</scope>
    <source>
        <tissue>Brain</tissue>
        <tissue>Pancreas</tissue>
    </source>
</reference>
<reference key="6">
    <citation type="journal article" date="2014" name="Mol. Cell. Proteomics">
        <title>Immunoaffinity enrichment and mass spectrometry analysis of protein methylation.</title>
        <authorList>
            <person name="Guo A."/>
            <person name="Gu H."/>
            <person name="Zhou J."/>
            <person name="Mulhern D."/>
            <person name="Wang Y."/>
            <person name="Lee K.A."/>
            <person name="Yang V."/>
            <person name="Aguiar M."/>
            <person name="Kornhauser J."/>
            <person name="Jia X."/>
            <person name="Ren J."/>
            <person name="Beausoleil S.A."/>
            <person name="Silva J.C."/>
            <person name="Vemulapalli V."/>
            <person name="Bedford M.T."/>
            <person name="Comb M.J."/>
        </authorList>
    </citation>
    <scope>METHYLATION [LARGE SCALE ANALYSIS] AT ARG-56; ARG-65; ARG-76 AND ARG-83</scope>
    <scope>IDENTIFICATION BY MASS SPECTROMETRY [LARGE SCALE ANALYSIS]</scope>
    <source>
        <tissue>Brain</tissue>
    </source>
</reference>